<feature type="chain" id="PRO_0000261980" description="Nucleotide-binding protein CYB_0891">
    <location>
        <begin position="1"/>
        <end position="163"/>
    </location>
</feature>
<name>Y891_SYNJB</name>
<dbReference type="EMBL" id="CP000240">
    <property type="protein sequence ID" value="ABD01870.1"/>
    <property type="molecule type" value="Genomic_DNA"/>
</dbReference>
<dbReference type="RefSeq" id="WP_011432526.1">
    <property type="nucleotide sequence ID" value="NC_007776.1"/>
</dbReference>
<dbReference type="SMR" id="Q2JN07"/>
<dbReference type="KEGG" id="cyb:CYB_0891"/>
<dbReference type="eggNOG" id="COG1666">
    <property type="taxonomic scope" value="Bacteria"/>
</dbReference>
<dbReference type="HOGENOM" id="CLU_099839_0_0_3"/>
<dbReference type="OrthoDB" id="9801447at2"/>
<dbReference type="Proteomes" id="UP000001938">
    <property type="component" value="Chromosome"/>
</dbReference>
<dbReference type="GO" id="GO:0005829">
    <property type="term" value="C:cytosol"/>
    <property type="evidence" value="ECO:0007669"/>
    <property type="project" value="TreeGrafter"/>
</dbReference>
<dbReference type="GO" id="GO:0000166">
    <property type="term" value="F:nucleotide binding"/>
    <property type="evidence" value="ECO:0007669"/>
    <property type="project" value="TreeGrafter"/>
</dbReference>
<dbReference type="CDD" id="cd11740">
    <property type="entry name" value="YajQ_like"/>
    <property type="match status" value="1"/>
</dbReference>
<dbReference type="Gene3D" id="3.30.70.860">
    <property type="match status" value="1"/>
</dbReference>
<dbReference type="Gene3D" id="3.30.70.990">
    <property type="entry name" value="YajQ-like, domain 2"/>
    <property type="match status" value="1"/>
</dbReference>
<dbReference type="HAMAP" id="MF_00632">
    <property type="entry name" value="YajQ"/>
    <property type="match status" value="1"/>
</dbReference>
<dbReference type="InterPro" id="IPR007551">
    <property type="entry name" value="DUF520"/>
</dbReference>
<dbReference type="InterPro" id="IPR035571">
    <property type="entry name" value="UPF0234-like_C"/>
</dbReference>
<dbReference type="InterPro" id="IPR035570">
    <property type="entry name" value="UPF0234_N"/>
</dbReference>
<dbReference type="InterPro" id="IPR036183">
    <property type="entry name" value="YajQ-like_sf"/>
</dbReference>
<dbReference type="NCBIfam" id="NF003819">
    <property type="entry name" value="PRK05412.1"/>
    <property type="match status" value="1"/>
</dbReference>
<dbReference type="PANTHER" id="PTHR30476">
    <property type="entry name" value="UPF0234 PROTEIN YAJQ"/>
    <property type="match status" value="1"/>
</dbReference>
<dbReference type="PANTHER" id="PTHR30476:SF0">
    <property type="entry name" value="UPF0234 PROTEIN YAJQ"/>
    <property type="match status" value="1"/>
</dbReference>
<dbReference type="Pfam" id="PF04461">
    <property type="entry name" value="DUF520"/>
    <property type="match status" value="1"/>
</dbReference>
<dbReference type="SUPFAM" id="SSF89963">
    <property type="entry name" value="YajQ-like"/>
    <property type="match status" value="2"/>
</dbReference>
<protein>
    <recommendedName>
        <fullName evidence="1">Nucleotide-binding protein CYB_0891</fullName>
    </recommendedName>
</protein>
<reference key="1">
    <citation type="journal article" date="2007" name="ISME J.">
        <title>Population level functional diversity in a microbial community revealed by comparative genomic and metagenomic analyses.</title>
        <authorList>
            <person name="Bhaya D."/>
            <person name="Grossman A.R."/>
            <person name="Steunou A.-S."/>
            <person name="Khuri N."/>
            <person name="Cohan F.M."/>
            <person name="Hamamura N."/>
            <person name="Melendrez M.C."/>
            <person name="Bateson M.M."/>
            <person name="Ward D.M."/>
            <person name="Heidelberg J.F."/>
        </authorList>
    </citation>
    <scope>NUCLEOTIDE SEQUENCE [LARGE SCALE GENOMIC DNA]</scope>
    <source>
        <strain>JA-2-3B'a(2-13)</strain>
    </source>
</reference>
<evidence type="ECO:0000255" key="1">
    <source>
        <dbReference type="HAMAP-Rule" id="MF_00632"/>
    </source>
</evidence>
<sequence>MASTYSFDIVSDFDRQELVNAVDQARREIKQRYDLKDTQTEIELEEGSLTITTANDMALNSIRDLLLTKAAKRGLSLKIFDFQPPESAGGNRVRQVVHLKKGIDATLAKQIAKQIRDNFKKVQPAIQGDLVRVSGKDKDELQAVIQMLRQQDYPVALQFVNYR</sequence>
<proteinExistence type="inferred from homology"/>
<comment type="function">
    <text evidence="1">Nucleotide-binding protein.</text>
</comment>
<comment type="similarity">
    <text evidence="1">Belongs to the YajQ family.</text>
</comment>
<gene>
    <name type="ordered locus">CYB_0891</name>
</gene>
<keyword id="KW-0547">Nucleotide-binding</keyword>
<keyword id="KW-1185">Reference proteome</keyword>
<accession>Q2JN07</accession>
<organism>
    <name type="scientific">Synechococcus sp. (strain JA-2-3B'a(2-13))</name>
    <name type="common">Cyanobacteria bacterium Yellowstone B-Prime</name>
    <dbReference type="NCBI Taxonomy" id="321332"/>
    <lineage>
        <taxon>Bacteria</taxon>
        <taxon>Bacillati</taxon>
        <taxon>Cyanobacteriota</taxon>
        <taxon>Cyanophyceae</taxon>
        <taxon>Synechococcales</taxon>
        <taxon>Synechococcaceae</taxon>
        <taxon>Synechococcus</taxon>
    </lineage>
</organism>